<keyword id="KW-0030">Aminoacyl-tRNA synthetase</keyword>
<keyword id="KW-0067">ATP-binding</keyword>
<keyword id="KW-0963">Cytoplasm</keyword>
<keyword id="KW-0436">Ligase</keyword>
<keyword id="KW-0547">Nucleotide-binding</keyword>
<keyword id="KW-0648">Protein biosynthesis</keyword>
<dbReference type="EC" id="6.1.1.23" evidence="1"/>
<dbReference type="EMBL" id="CP000922">
    <property type="protein sequence ID" value="ACJ33110.1"/>
    <property type="molecule type" value="Genomic_DNA"/>
</dbReference>
<dbReference type="RefSeq" id="WP_012574412.1">
    <property type="nucleotide sequence ID" value="NC_011567.1"/>
</dbReference>
<dbReference type="SMR" id="B7GFR1"/>
<dbReference type="STRING" id="491915.Aflv_0731"/>
<dbReference type="GeneID" id="7036988"/>
<dbReference type="KEGG" id="afl:Aflv_0731"/>
<dbReference type="PATRIC" id="fig|491915.6.peg.747"/>
<dbReference type="eggNOG" id="COG0173">
    <property type="taxonomic scope" value="Bacteria"/>
</dbReference>
<dbReference type="HOGENOM" id="CLU_014330_3_2_9"/>
<dbReference type="Proteomes" id="UP000000742">
    <property type="component" value="Chromosome"/>
</dbReference>
<dbReference type="GO" id="GO:0005737">
    <property type="term" value="C:cytoplasm"/>
    <property type="evidence" value="ECO:0007669"/>
    <property type="project" value="UniProtKB-SubCell"/>
</dbReference>
<dbReference type="GO" id="GO:0004815">
    <property type="term" value="F:aspartate-tRNA ligase activity"/>
    <property type="evidence" value="ECO:0007669"/>
    <property type="project" value="UniProtKB-UniRule"/>
</dbReference>
<dbReference type="GO" id="GO:0050560">
    <property type="term" value="F:aspartate-tRNA(Asn) ligase activity"/>
    <property type="evidence" value="ECO:0007669"/>
    <property type="project" value="UniProtKB-EC"/>
</dbReference>
<dbReference type="GO" id="GO:0005524">
    <property type="term" value="F:ATP binding"/>
    <property type="evidence" value="ECO:0007669"/>
    <property type="project" value="UniProtKB-UniRule"/>
</dbReference>
<dbReference type="GO" id="GO:0140096">
    <property type="term" value="F:catalytic activity, acting on a protein"/>
    <property type="evidence" value="ECO:0007669"/>
    <property type="project" value="UniProtKB-ARBA"/>
</dbReference>
<dbReference type="GO" id="GO:0003676">
    <property type="term" value="F:nucleic acid binding"/>
    <property type="evidence" value="ECO:0007669"/>
    <property type="project" value="InterPro"/>
</dbReference>
<dbReference type="GO" id="GO:0016740">
    <property type="term" value="F:transferase activity"/>
    <property type="evidence" value="ECO:0007669"/>
    <property type="project" value="UniProtKB-ARBA"/>
</dbReference>
<dbReference type="GO" id="GO:0006422">
    <property type="term" value="P:aspartyl-tRNA aminoacylation"/>
    <property type="evidence" value="ECO:0007669"/>
    <property type="project" value="UniProtKB-UniRule"/>
</dbReference>
<dbReference type="CDD" id="cd00777">
    <property type="entry name" value="AspRS_core"/>
    <property type="match status" value="1"/>
</dbReference>
<dbReference type="CDD" id="cd04317">
    <property type="entry name" value="EcAspRS_like_N"/>
    <property type="match status" value="1"/>
</dbReference>
<dbReference type="Gene3D" id="3.30.930.10">
    <property type="entry name" value="Bira Bifunctional Protein, Domain 2"/>
    <property type="match status" value="1"/>
</dbReference>
<dbReference type="Gene3D" id="3.30.1360.30">
    <property type="entry name" value="GAD-like domain"/>
    <property type="match status" value="1"/>
</dbReference>
<dbReference type="Gene3D" id="2.40.50.140">
    <property type="entry name" value="Nucleic acid-binding proteins"/>
    <property type="match status" value="1"/>
</dbReference>
<dbReference type="HAMAP" id="MF_00044">
    <property type="entry name" value="Asp_tRNA_synth_type1"/>
    <property type="match status" value="1"/>
</dbReference>
<dbReference type="InterPro" id="IPR004364">
    <property type="entry name" value="Aa-tRNA-synt_II"/>
</dbReference>
<dbReference type="InterPro" id="IPR006195">
    <property type="entry name" value="aa-tRNA-synth_II"/>
</dbReference>
<dbReference type="InterPro" id="IPR045864">
    <property type="entry name" value="aa-tRNA-synth_II/BPL/LPL"/>
</dbReference>
<dbReference type="InterPro" id="IPR004524">
    <property type="entry name" value="Asp-tRNA-ligase_1"/>
</dbReference>
<dbReference type="InterPro" id="IPR047089">
    <property type="entry name" value="Asp-tRNA-ligase_1_N"/>
</dbReference>
<dbReference type="InterPro" id="IPR002312">
    <property type="entry name" value="Asp/Asn-tRNA-synth_IIb"/>
</dbReference>
<dbReference type="InterPro" id="IPR047090">
    <property type="entry name" value="AspRS_core"/>
</dbReference>
<dbReference type="InterPro" id="IPR004115">
    <property type="entry name" value="GAD-like_sf"/>
</dbReference>
<dbReference type="InterPro" id="IPR029351">
    <property type="entry name" value="GAD_dom"/>
</dbReference>
<dbReference type="InterPro" id="IPR012340">
    <property type="entry name" value="NA-bd_OB-fold"/>
</dbReference>
<dbReference type="InterPro" id="IPR004365">
    <property type="entry name" value="NA-bd_OB_tRNA"/>
</dbReference>
<dbReference type="NCBIfam" id="TIGR00459">
    <property type="entry name" value="aspS_bact"/>
    <property type="match status" value="1"/>
</dbReference>
<dbReference type="NCBIfam" id="NF001750">
    <property type="entry name" value="PRK00476.1"/>
    <property type="match status" value="1"/>
</dbReference>
<dbReference type="PANTHER" id="PTHR22594:SF5">
    <property type="entry name" value="ASPARTATE--TRNA LIGASE, MITOCHONDRIAL"/>
    <property type="match status" value="1"/>
</dbReference>
<dbReference type="PANTHER" id="PTHR22594">
    <property type="entry name" value="ASPARTYL/LYSYL-TRNA SYNTHETASE"/>
    <property type="match status" value="1"/>
</dbReference>
<dbReference type="Pfam" id="PF02938">
    <property type="entry name" value="GAD"/>
    <property type="match status" value="1"/>
</dbReference>
<dbReference type="Pfam" id="PF00152">
    <property type="entry name" value="tRNA-synt_2"/>
    <property type="match status" value="1"/>
</dbReference>
<dbReference type="Pfam" id="PF01336">
    <property type="entry name" value="tRNA_anti-codon"/>
    <property type="match status" value="1"/>
</dbReference>
<dbReference type="PRINTS" id="PR01042">
    <property type="entry name" value="TRNASYNTHASP"/>
</dbReference>
<dbReference type="SUPFAM" id="SSF55681">
    <property type="entry name" value="Class II aaRS and biotin synthetases"/>
    <property type="match status" value="1"/>
</dbReference>
<dbReference type="SUPFAM" id="SSF55261">
    <property type="entry name" value="GAD domain-like"/>
    <property type="match status" value="1"/>
</dbReference>
<dbReference type="SUPFAM" id="SSF50249">
    <property type="entry name" value="Nucleic acid-binding proteins"/>
    <property type="match status" value="1"/>
</dbReference>
<dbReference type="PROSITE" id="PS50862">
    <property type="entry name" value="AA_TRNA_LIGASE_II"/>
    <property type="match status" value="1"/>
</dbReference>
<name>SYDND_ANOFW</name>
<sequence>MFGRTHYCGEVTDMAIGQTVRLKGWVQKRRDLGGLIFIDLRDRTGIVQIVFSPDVSKEALQVAETIRSEYVLDVEGTVVQREEGQVNPNLPTGTIEVHAMHVTILSEAKTPPFLISDKTDVSEDVRLKYRYLDLRRPVMFQTFKMRHQVTKAIRDFLDEEGFLEVETPILTKSTPEGARDYLVPSRVHPGEFYALPQSPQIFKQLLMVAGFERYYQIARCFRDEDLRADRQPEFTQVDIETSFMSQDDILAMIERMMARVMKVAKGVDISIPFPRMSYDEAIARYGSDKPDTRFGLELVDLSEQVKDCGFKVFASAVQNGGQVKAINVKGAADKYSRKDIDALTEYVARYGAKGLAWLKVEADGLKGPIAKFFTEDEQKQMMQTLEAETGDLLLFVADKKSVVADALGALRLKLGKDLQLIDESAFHFLWITDWPLFEYDEEEGRYYAAHHPFTMPVREDVPKFETDPASVRAQAYDLVLNGYELGGGSLRIFERDIQEKMFKTLGFTEEQAREQFGFLLEAFEYGTPPHGGIALGLDRLVMLLAGRSNLRDTIAFPKTASASCLLTEAPSAVSEEQLEELHLRIKDVQKVD</sequence>
<comment type="function">
    <text evidence="1">Aspartyl-tRNA synthetase with relaxed tRNA specificity since it is able to aspartylate not only its cognate tRNA(Asp) but also tRNA(Asn). Reaction proceeds in two steps: L-aspartate is first activated by ATP to form Asp-AMP and then transferred to the acceptor end of tRNA(Asp/Asn).</text>
</comment>
<comment type="catalytic activity">
    <reaction evidence="1">
        <text>tRNA(Asx) + L-aspartate + ATP = L-aspartyl-tRNA(Asx) + AMP + diphosphate</text>
        <dbReference type="Rhea" id="RHEA:18349"/>
        <dbReference type="Rhea" id="RHEA-COMP:9710"/>
        <dbReference type="Rhea" id="RHEA-COMP:9711"/>
        <dbReference type="ChEBI" id="CHEBI:29991"/>
        <dbReference type="ChEBI" id="CHEBI:30616"/>
        <dbReference type="ChEBI" id="CHEBI:33019"/>
        <dbReference type="ChEBI" id="CHEBI:78442"/>
        <dbReference type="ChEBI" id="CHEBI:78516"/>
        <dbReference type="ChEBI" id="CHEBI:456215"/>
        <dbReference type="EC" id="6.1.1.23"/>
    </reaction>
</comment>
<comment type="subunit">
    <text evidence="1">Homodimer.</text>
</comment>
<comment type="subcellular location">
    <subcellularLocation>
        <location evidence="1">Cytoplasm</location>
    </subcellularLocation>
</comment>
<comment type="similarity">
    <text evidence="1">Belongs to the class-II aminoacyl-tRNA synthetase family. Type 1 subfamily.</text>
</comment>
<protein>
    <recommendedName>
        <fullName evidence="1">Aspartate--tRNA(Asp/Asn) ligase</fullName>
        <ecNumber evidence="1">6.1.1.23</ecNumber>
    </recommendedName>
    <alternativeName>
        <fullName evidence="1">Aspartyl-tRNA synthetase</fullName>
        <shortName evidence="1">AspRS</shortName>
    </alternativeName>
    <alternativeName>
        <fullName evidence="1">Non-discriminating aspartyl-tRNA synthetase</fullName>
        <shortName evidence="1">ND-AspRS</shortName>
    </alternativeName>
</protein>
<evidence type="ECO:0000255" key="1">
    <source>
        <dbReference type="HAMAP-Rule" id="MF_00044"/>
    </source>
</evidence>
<accession>B7GFR1</accession>
<proteinExistence type="inferred from homology"/>
<feature type="chain" id="PRO_1000198952" description="Aspartate--tRNA(Asp/Asn) ligase">
    <location>
        <begin position="1"/>
        <end position="592"/>
    </location>
</feature>
<feature type="region of interest" description="Aspartate" evidence="1">
    <location>
        <begin position="200"/>
        <end position="203"/>
    </location>
</feature>
<feature type="binding site" evidence="1">
    <location>
        <position position="176"/>
    </location>
    <ligand>
        <name>L-aspartate</name>
        <dbReference type="ChEBI" id="CHEBI:29991"/>
    </ligand>
</feature>
<feature type="binding site" evidence="1">
    <location>
        <begin position="222"/>
        <end position="224"/>
    </location>
    <ligand>
        <name>ATP</name>
        <dbReference type="ChEBI" id="CHEBI:30616"/>
    </ligand>
</feature>
<feature type="binding site" evidence="1">
    <location>
        <position position="222"/>
    </location>
    <ligand>
        <name>L-aspartate</name>
        <dbReference type="ChEBI" id="CHEBI:29991"/>
    </ligand>
</feature>
<feature type="binding site" evidence="1">
    <location>
        <position position="231"/>
    </location>
    <ligand>
        <name>ATP</name>
        <dbReference type="ChEBI" id="CHEBI:30616"/>
    </ligand>
</feature>
<feature type="binding site" evidence="1">
    <location>
        <position position="450"/>
    </location>
    <ligand>
        <name>L-aspartate</name>
        <dbReference type="ChEBI" id="CHEBI:29991"/>
    </ligand>
</feature>
<feature type="binding site" evidence="1">
    <location>
        <position position="484"/>
    </location>
    <ligand>
        <name>ATP</name>
        <dbReference type="ChEBI" id="CHEBI:30616"/>
    </ligand>
</feature>
<feature type="binding site" evidence="1">
    <location>
        <position position="491"/>
    </location>
    <ligand>
        <name>L-aspartate</name>
        <dbReference type="ChEBI" id="CHEBI:29991"/>
    </ligand>
</feature>
<feature type="binding site" evidence="1">
    <location>
        <begin position="536"/>
        <end position="539"/>
    </location>
    <ligand>
        <name>ATP</name>
        <dbReference type="ChEBI" id="CHEBI:30616"/>
    </ligand>
</feature>
<feature type="site" description="Important for tRNA non-discrimination" evidence="1">
    <location>
        <position position="84"/>
    </location>
</feature>
<organism>
    <name type="scientific">Anoxybacillus flavithermus (strain DSM 21510 / WK1)</name>
    <dbReference type="NCBI Taxonomy" id="491915"/>
    <lineage>
        <taxon>Bacteria</taxon>
        <taxon>Bacillati</taxon>
        <taxon>Bacillota</taxon>
        <taxon>Bacilli</taxon>
        <taxon>Bacillales</taxon>
        <taxon>Anoxybacillaceae</taxon>
        <taxon>Anoxybacillus</taxon>
    </lineage>
</organism>
<gene>
    <name evidence="1" type="primary">aspS</name>
    <name type="ordered locus">Aflv_0731</name>
</gene>
<reference key="1">
    <citation type="journal article" date="2008" name="Genome Biol.">
        <title>Encapsulated in silica: genome, proteome and physiology of the thermophilic bacterium Anoxybacillus flavithermus WK1.</title>
        <authorList>
            <person name="Saw J.H."/>
            <person name="Mountain B.W."/>
            <person name="Feng L."/>
            <person name="Omelchenko M.V."/>
            <person name="Hou S."/>
            <person name="Saito J.A."/>
            <person name="Stott M.B."/>
            <person name="Li D."/>
            <person name="Zhao G."/>
            <person name="Wu J."/>
            <person name="Galperin M.Y."/>
            <person name="Koonin E.V."/>
            <person name="Makarova K.S."/>
            <person name="Wolf Y.I."/>
            <person name="Rigden D.J."/>
            <person name="Dunfield P.F."/>
            <person name="Wang L."/>
            <person name="Alam M."/>
        </authorList>
    </citation>
    <scope>NUCLEOTIDE SEQUENCE [LARGE SCALE GENOMIC DNA]</scope>
    <source>
        <strain>DSM 21510 / WK1</strain>
    </source>
</reference>